<accession>A7HM44</accession>
<name>RL29_FERNB</name>
<reference key="1">
    <citation type="submission" date="2007-07" db="EMBL/GenBank/DDBJ databases">
        <title>Complete sequence of Fervidobacterium nodosum Rt17-B1.</title>
        <authorList>
            <consortium name="US DOE Joint Genome Institute"/>
            <person name="Copeland A."/>
            <person name="Lucas S."/>
            <person name="Lapidus A."/>
            <person name="Barry K."/>
            <person name="Glavina del Rio T."/>
            <person name="Dalin E."/>
            <person name="Tice H."/>
            <person name="Pitluck S."/>
            <person name="Saunders E."/>
            <person name="Brettin T."/>
            <person name="Bruce D."/>
            <person name="Detter J.C."/>
            <person name="Han C."/>
            <person name="Schmutz J."/>
            <person name="Larimer F."/>
            <person name="Land M."/>
            <person name="Hauser L."/>
            <person name="Kyrpides N."/>
            <person name="Mikhailova N."/>
            <person name="Nelson K."/>
            <person name="Gogarten J.P."/>
            <person name="Noll K."/>
            <person name="Richardson P."/>
        </authorList>
    </citation>
    <scope>NUCLEOTIDE SEQUENCE [LARGE SCALE GENOMIC DNA]</scope>
    <source>
        <strain>ATCC 35602 / DSM 5306 / Rt17-B1</strain>
    </source>
</reference>
<dbReference type="EMBL" id="CP000771">
    <property type="protein sequence ID" value="ABS60977.1"/>
    <property type="molecule type" value="Genomic_DNA"/>
</dbReference>
<dbReference type="RefSeq" id="WP_011994290.1">
    <property type="nucleotide sequence ID" value="NC_009718.1"/>
</dbReference>
<dbReference type="SMR" id="A7HM44"/>
<dbReference type="STRING" id="381764.Fnod_1130"/>
<dbReference type="KEGG" id="fno:Fnod_1130"/>
<dbReference type="eggNOG" id="COG0255">
    <property type="taxonomic scope" value="Bacteria"/>
</dbReference>
<dbReference type="HOGENOM" id="CLU_158491_5_2_0"/>
<dbReference type="OrthoDB" id="9815192at2"/>
<dbReference type="Proteomes" id="UP000002415">
    <property type="component" value="Chromosome"/>
</dbReference>
<dbReference type="GO" id="GO:0022625">
    <property type="term" value="C:cytosolic large ribosomal subunit"/>
    <property type="evidence" value="ECO:0007669"/>
    <property type="project" value="TreeGrafter"/>
</dbReference>
<dbReference type="GO" id="GO:0003735">
    <property type="term" value="F:structural constituent of ribosome"/>
    <property type="evidence" value="ECO:0007669"/>
    <property type="project" value="InterPro"/>
</dbReference>
<dbReference type="GO" id="GO:0006412">
    <property type="term" value="P:translation"/>
    <property type="evidence" value="ECO:0007669"/>
    <property type="project" value="UniProtKB-UniRule"/>
</dbReference>
<dbReference type="CDD" id="cd00427">
    <property type="entry name" value="Ribosomal_L29_HIP"/>
    <property type="match status" value="1"/>
</dbReference>
<dbReference type="FunFam" id="1.10.287.310:FF:000001">
    <property type="entry name" value="50S ribosomal protein L29"/>
    <property type="match status" value="1"/>
</dbReference>
<dbReference type="Gene3D" id="1.10.287.310">
    <property type="match status" value="1"/>
</dbReference>
<dbReference type="HAMAP" id="MF_00374">
    <property type="entry name" value="Ribosomal_uL29"/>
    <property type="match status" value="1"/>
</dbReference>
<dbReference type="InterPro" id="IPR050063">
    <property type="entry name" value="Ribosomal_protein_uL29"/>
</dbReference>
<dbReference type="InterPro" id="IPR001854">
    <property type="entry name" value="Ribosomal_uL29"/>
</dbReference>
<dbReference type="InterPro" id="IPR036049">
    <property type="entry name" value="Ribosomal_uL29_sf"/>
</dbReference>
<dbReference type="NCBIfam" id="TIGR00012">
    <property type="entry name" value="L29"/>
    <property type="match status" value="1"/>
</dbReference>
<dbReference type="PANTHER" id="PTHR10916">
    <property type="entry name" value="60S RIBOSOMAL PROTEIN L35/50S RIBOSOMAL PROTEIN L29"/>
    <property type="match status" value="1"/>
</dbReference>
<dbReference type="PANTHER" id="PTHR10916:SF0">
    <property type="entry name" value="LARGE RIBOSOMAL SUBUNIT PROTEIN UL29C"/>
    <property type="match status" value="1"/>
</dbReference>
<dbReference type="Pfam" id="PF00831">
    <property type="entry name" value="Ribosomal_L29"/>
    <property type="match status" value="1"/>
</dbReference>
<dbReference type="SUPFAM" id="SSF46561">
    <property type="entry name" value="Ribosomal protein L29 (L29p)"/>
    <property type="match status" value="1"/>
</dbReference>
<feature type="chain" id="PRO_1000072143" description="Large ribosomal subunit protein uL29">
    <location>
        <begin position="1"/>
        <end position="66"/>
    </location>
</feature>
<protein>
    <recommendedName>
        <fullName evidence="1">Large ribosomal subunit protein uL29</fullName>
    </recommendedName>
    <alternativeName>
        <fullName evidence="2">50S ribosomal protein L29</fullName>
    </alternativeName>
</protein>
<evidence type="ECO:0000255" key="1">
    <source>
        <dbReference type="HAMAP-Rule" id="MF_00374"/>
    </source>
</evidence>
<evidence type="ECO:0000305" key="2"/>
<organism>
    <name type="scientific">Fervidobacterium nodosum (strain ATCC 35602 / DSM 5306 / Rt17-B1)</name>
    <dbReference type="NCBI Taxonomy" id="381764"/>
    <lineage>
        <taxon>Bacteria</taxon>
        <taxon>Thermotogati</taxon>
        <taxon>Thermotogota</taxon>
        <taxon>Thermotogae</taxon>
        <taxon>Thermotogales</taxon>
        <taxon>Fervidobacteriaceae</taxon>
        <taxon>Fervidobacterium</taxon>
    </lineage>
</organism>
<proteinExistence type="inferred from homology"/>
<sequence>MTPVEIRNMNNEELLKLLEEKKRTLMNLRFQNALGELRDPSLIQKTKKDIARIKTILRERELGIRR</sequence>
<gene>
    <name evidence="1" type="primary">rpmC</name>
    <name type="ordered locus">Fnod_1130</name>
</gene>
<keyword id="KW-1185">Reference proteome</keyword>
<keyword id="KW-0687">Ribonucleoprotein</keyword>
<keyword id="KW-0689">Ribosomal protein</keyword>
<comment type="similarity">
    <text evidence="1">Belongs to the universal ribosomal protein uL29 family.</text>
</comment>